<accession>Q89709</accession>
<accession>A0A059WB91</accession>
<sequence>MEKYREIHQRVKEIPPGGASALECLDLLDRLYAVRHDVVDQMIKHDWSDNKDMERPIGQVLLMAGVPNDVIQGMEKKVIPTSPSGQILKSFFRMTPDNYKITGALIEFIEVTVTADVAKGIREKKLKYESGLQFVESLLSQEHKKGNINQAYKITFDVVAVKTDGSNISTQWPSRRNDGVVQHMRLVQADINYVREHLIKPDERASLEAMFNLKFHVGGPKLRYFNIPDYKPQSLCQPEITNLIQYCKHWLTEDHDFVFKEVTGNNVMNSFENNESVYMSRYRESRKPRNFLLIQGSIQGPYLPSTISSDQCDTRIGCLEVLKVHPETPVQAIAVDMAYKYMELNRDEIINYYNPRVHFQATQSVKEPGTFKLGLSQLNPMSKSILDQVGKHKSEKGLFGEPLESINISSQIQQNECSRIIESILSNLEINVGEVTMSLANPRKTTGVDELLGKFYENELSKYLISILRKTAAWHIGHLIRDITESLIAHAGLKRSKYWSIHAYDHGGVILFILPSKSLEVVGSYIRYFTVFKDGIGLIDEENLDSKVDIDGVQWCFSKVMSIDLNRLLALNIAFEKALLATATWFQYYTEDQGHFPLQHALRSVFSFHFLLCVSQKMKICAIFDNLRYLIPAVTSLYSGYELLIEKFFERPFKSALEVYLYNIIKALLISLAQNNKVRFYSKVRLLGLTVDHSTVGASGVYPSLMSRVVYKHYRSLISEATTCFFLFEKGLHGNLNEEAKIHLETVEWARKFEAKERKYGDILMREGYTIDAIRVGDVQVEQQLFCQEVVELSAEELNKYLQAKSQVLSSNIMNKHWDKPYFSQTRNISLKGMSGALQEDGHLAASVTLIEAIRFLNRSQTNPNVIDMYEQTKQHKAQARIVRKYQRTEADRGFFITTLPTRVRLEIIEDYYDAIARVVPEEYISYGGDKKILNIQTALEKALRWASGSSEVITSTGNVIKFKRRLMYVSADATKWSPGDNSAKFKRFTQALYDGLSDEKLKCCVVDALRHVYETEFFMSRKLHRYIDSMDEHSEAVQDFLDFFKGGVSATVKGNWLQGNLNKCSSLFGAAVSLLFRRIWAELFPELECFFEFAHHSDDALFIYGYLEPEDDGTDWFLYVSQQIQAGNYHWHAVNQEMWKSMFNLHEHLLLMGSIKVSPKKTTVSPTNAEFLSTFFEGCAVSIPFIKILLGSLSDLPGLGFFDDLAAAQSRCVKAMDLGASPQLAQLAVVICTSKVERLYGTADGMVNSPVAFLKVTKAHVPIPLGGDGSMSIMELATAGIGMADKNILKQAFYSYKHTRRDGDRYVLGLFKFLMSLSEDVFQHDRLGEFSFVGKVQWKVFTPKNEFEFFDQFSQSYLKSWTNQHPVYDYIIPRGRDNLLVYLVRKLNDPSIVTAMTMQSPLQLRFRMQAKQHMKVCKLEGEWVTFREVLAAADSFATKYNPTEKDLDLFNTLVSCTFSKEYAWKDFLNEVRCEVVPTKHVHRSKIARTFTVREKDQAIQNPITAVIGYKYASTVDEISDVLDSSFFPDSLSADLQVMKEGVYRELGLDIGLPEVLKRIAPLLYKAGRSRVVIVEGNVEGTAESICSYWLRSMSLVKTIKVRPKKEVLRAVSLYSTKENIGLQDDVAATRLCIEVWRWCKANDQNVNDWLNALYFEKQTLMDWVERFRRKGVVPIDPEIQCIALLLYDVLGYKSVLQMQANRRAYSGKQYDAYCVQTYNEETRLYEGDLRVTFNFGLDCARLEIFWDKKEYILETSITQRHVLKLMMEEVTQELLRCGMRFKTEQVSHTRSLVLFKTESGFEWGKPNVPCIVFKHCALRTGLRTKQAINKEFMINVQADGFRAIAQMDMESPRFLLAHAYHTLRDVRYQAVQAVGNVWFQTAQHKLFINPIISSGLLENFMKGLPAAIPPAAYSLIMNKAKISVDLFMFNELLALVNPRNVLNLDGIEETSEGYSTVTSISSRQWSEEVSLMADDDIDDEEEFTIALDDIDFEQINLDEDIQHFLQDESAYTGDLTIQTEEVEVKRIRGVTRVLEPVKLIKSWVSKGLAIDKVYNPIGIVLMARYMSKNYDFSKIPLALLNPYDLTEFESVVKGWGETVNDRFLEVDNDAQRLVREKNILPEDILPDSLFSFRHVDVLLKRLFPHDPVSSFY</sequence>
<feature type="chain" id="PRO_0000455193" description="RNA-directed RNA polymerase L">
    <location>
        <begin position="1"/>
        <end position="2153"/>
    </location>
</feature>
<feature type="domain" description="RdRp catalytic" evidence="6">
    <location>
        <begin position="957"/>
        <end position="1143"/>
    </location>
</feature>
<feature type="region of interest" description="Interaction with the viral nucleoprotein" evidence="8">
    <location>
        <begin position="1291"/>
        <end position="2153"/>
    </location>
</feature>
<feature type="active site" description="For endonuclease activity" evidence="3">
    <location>
        <position position="124"/>
    </location>
</feature>
<feature type="binding site" evidence="4">
    <location>
        <position position="36"/>
    </location>
    <ligand>
        <name>Mn(2+)</name>
        <dbReference type="ChEBI" id="CHEBI:29035"/>
        <label>1</label>
    </ligand>
</feature>
<feature type="binding site" evidence="3">
    <location>
        <position position="54"/>
    </location>
    <ligand>
        <name>Mn(2+)</name>
        <dbReference type="ChEBI" id="CHEBI:29035"/>
        <label>2</label>
    </ligand>
</feature>
<feature type="binding site" evidence="4">
    <location>
        <position position="97"/>
    </location>
    <ligand>
        <name>Mn(2+)</name>
        <dbReference type="ChEBI" id="CHEBI:29035"/>
        <label>1</label>
    </ligand>
</feature>
<feature type="binding site" evidence="4">
    <location>
        <position position="97"/>
    </location>
    <ligand>
        <name>Mn(2+)</name>
        <dbReference type="ChEBI" id="CHEBI:29035"/>
        <label>2</label>
    </ligand>
</feature>
<feature type="binding site" evidence="4">
    <location>
        <position position="110"/>
    </location>
    <ligand>
        <name>Mn(2+)</name>
        <dbReference type="ChEBI" id="CHEBI:29035"/>
        <label>1</label>
    </ligand>
</feature>
<feature type="binding site" evidence="4">
    <location>
        <position position="111"/>
    </location>
    <ligand>
        <name>Mn(2+)</name>
        <dbReference type="ChEBI" id="CHEBI:29035"/>
        <label>1</label>
    </ligand>
</feature>
<feature type="binding site" evidence="2">
    <location>
        <position position="1100"/>
    </location>
    <ligand>
        <name>Mg(2+)</name>
        <dbReference type="ChEBI" id="CHEBI:18420"/>
        <note>catalytic; for RdRp activity</note>
    </ligand>
</feature>
<feature type="sequence variant" description="In strain: 77734." evidence="7">
    <original>V</original>
    <variation>I</variation>
    <location>
        <position position="11"/>
    </location>
</feature>
<feature type="sequence variant" description="In strain: 77734." evidence="7">
    <original>S</original>
    <variation>D</variation>
    <location>
        <position position="276"/>
    </location>
</feature>
<feature type="sequence variant" description="In strain: 77734." evidence="7">
    <original>R</original>
    <variation>K</variation>
    <location>
        <position position="1791"/>
    </location>
</feature>
<feature type="sequence variant" description="In strain: 77734." evidence="7">
    <original>A</original>
    <variation>T</variation>
    <location>
        <position position="1883"/>
    </location>
</feature>
<feature type="sequence variant" description="In strain: 77734." evidence="7">
    <original>R</original>
    <variation>K</variation>
    <location>
        <position position="1940"/>
    </location>
</feature>
<feature type="sequence variant" description="In strain: 77734." evidence="7">
    <original>H</original>
    <variation>R</variation>
    <location>
        <position position="2146"/>
    </location>
</feature>
<keyword id="KW-1157">Cap snatching</keyword>
<keyword id="KW-0255">Endonuclease</keyword>
<keyword id="KW-1035">Host cytoplasm</keyword>
<keyword id="KW-0378">Hydrolase</keyword>
<keyword id="KW-0460">Magnesium</keyword>
<keyword id="KW-0464">Manganese</keyword>
<keyword id="KW-0479">Metal-binding</keyword>
<keyword id="KW-0540">Nuclease</keyword>
<keyword id="KW-0547">Nucleotide-binding</keyword>
<keyword id="KW-0548">Nucleotidyltransferase</keyword>
<keyword id="KW-0696">RNA-directed RNA polymerase</keyword>
<keyword id="KW-0808">Transferase</keyword>
<keyword id="KW-0693">Viral RNA replication</keyword>
<comment type="function">
    <text evidence="4">RNA-dependent RNA polymerase, which is responsible for the replication and transcription of the viral RNA genome using antigenomic RNA as an intermediate (By similarity). During transcription, synthesizes subgenomic RNAs and assures their capping by a cap-snatching mechanism, which involves the endonuclease activity cleaving the host capped pre-mRNAs. These short capped RNAs are then used as primers for viral transcription. Cleaves ssRNA substrates but not DNA (By similarity). Seems to downregulate the expression of its own and heterologous mRNAs through its endonuclease activity (By similarity).</text>
</comment>
<comment type="catalytic activity">
    <reaction evidence="6">
        <text>RNA(n) + a ribonucleoside 5'-triphosphate = RNA(n+1) + diphosphate</text>
        <dbReference type="Rhea" id="RHEA:21248"/>
        <dbReference type="Rhea" id="RHEA-COMP:14527"/>
        <dbReference type="Rhea" id="RHEA-COMP:17342"/>
        <dbReference type="ChEBI" id="CHEBI:33019"/>
        <dbReference type="ChEBI" id="CHEBI:61557"/>
        <dbReference type="ChEBI" id="CHEBI:140395"/>
        <dbReference type="EC" id="2.7.7.48"/>
    </reaction>
</comment>
<comment type="cofactor">
    <cofactor evidence="3">
        <name>Mn(2+)</name>
        <dbReference type="ChEBI" id="CHEBI:29035"/>
    </cofactor>
    <text evidence="3 9">For endonuclease activity. Binds 2 Mn2+ ions in the active site. The divalent metal ions are crucial for catalytic activity (PubMed:31948728).</text>
</comment>
<comment type="cofactor">
    <cofactor evidence="1">
        <name>Mg(2+)</name>
        <dbReference type="ChEBI" id="CHEBI:18420"/>
    </cofactor>
    <cofactor evidence="1">
        <name>Mn(2+)</name>
        <dbReference type="ChEBI" id="CHEBI:29035"/>
    </cofactor>
    <text evidence="1">For polymerase activity.</text>
</comment>
<comment type="subunit">
    <text evidence="8">Interacts with the viral nucleoprotein; this interaction is required for RdRp function.</text>
</comment>
<comment type="subcellular location">
    <subcellularLocation>
        <location evidence="5">Host cytoplasm</location>
        <location evidence="5">Host perinuclear region</location>
    </subcellularLocation>
</comment>
<comment type="domain">
    <text evidence="1 2 4">The N-terminus contains the endonuclease activity (endoN) (By similarity). The central region contains the RdRp activity (By similarity). The C-terminus contains the cap-binding region (By similarity).</text>
</comment>
<comment type="miscellaneous">
    <text evidence="10">Classified as His(+) endonuclease since it has a histidine upstream of the active site that coordinates the first cation.</text>
</comment>
<comment type="similarity">
    <text evidence="11">Belongs to the Bunyavirales RNA polymerase family.</text>
</comment>
<protein>
    <recommendedName>
        <fullName>RNA-directed RNA polymerase L</fullName>
        <shortName>Protein L</shortName>
        <ecNumber evidence="6">2.7.7.48</ecNumber>
    </recommendedName>
    <alternativeName>
        <fullName>Large structural protein</fullName>
    </alternativeName>
    <alternativeName>
        <fullName evidence="11">RdRp</fullName>
    </alternativeName>
    <alternativeName>
        <fullName>Replicase</fullName>
    </alternativeName>
    <alternativeName>
        <fullName>Transcriptase</fullName>
    </alternativeName>
    <domain>
        <recommendedName>
            <fullName>cap-snatching endonuclease</fullName>
            <ecNumber evidence="3">3.1.-.-</ecNumber>
        </recommendedName>
    </domain>
</protein>
<name>L_SINV</name>
<dbReference type="EC" id="2.7.7.48" evidence="6"/>
<dbReference type="EC" id="3.1.-.-" evidence="3"/>
<dbReference type="EMBL" id="L37901">
    <property type="protein sequence ID" value="AAC42204.1"/>
    <property type="molecule type" value="Genomic_RNA"/>
</dbReference>
<dbReference type="EMBL" id="L37902">
    <property type="protein sequence ID" value="AAC42205.1"/>
    <property type="molecule type" value="Genomic_RNA"/>
</dbReference>
<dbReference type="EMBL" id="KF537001">
    <property type="protein sequence ID" value="AIA08875.1"/>
    <property type="molecule type" value="Viral_cRNA"/>
</dbReference>
<dbReference type="RefSeq" id="NP_941976.1">
    <property type="nucleotide sequence ID" value="NC_005217.1"/>
</dbReference>
<dbReference type="RefSeq" id="YP_010839203.1">
    <property type="nucleotide sequence ID" value="NC_077671.1"/>
</dbReference>
<dbReference type="SMR" id="Q89709"/>
<dbReference type="GeneID" id="2943143"/>
<dbReference type="GeneID" id="80557444"/>
<dbReference type="KEGG" id="vg:2943143"/>
<dbReference type="Proteomes" id="UP000113911">
    <property type="component" value="Genome"/>
</dbReference>
<dbReference type="Proteomes" id="UP000167429">
    <property type="component" value="Genome"/>
</dbReference>
<dbReference type="Proteomes" id="UP000204632">
    <property type="component" value="Genome"/>
</dbReference>
<dbReference type="GO" id="GO:0044220">
    <property type="term" value="C:host cell perinuclear region of cytoplasm"/>
    <property type="evidence" value="ECO:0007669"/>
    <property type="project" value="UniProtKB-SubCell"/>
</dbReference>
<dbReference type="GO" id="GO:0004519">
    <property type="term" value="F:endonuclease activity"/>
    <property type="evidence" value="ECO:0007669"/>
    <property type="project" value="UniProtKB-KW"/>
</dbReference>
<dbReference type="GO" id="GO:0046872">
    <property type="term" value="F:metal ion binding"/>
    <property type="evidence" value="ECO:0007669"/>
    <property type="project" value="UniProtKB-KW"/>
</dbReference>
<dbReference type="GO" id="GO:0000166">
    <property type="term" value="F:nucleotide binding"/>
    <property type="evidence" value="ECO:0007669"/>
    <property type="project" value="UniProtKB-KW"/>
</dbReference>
<dbReference type="GO" id="GO:0003968">
    <property type="term" value="F:RNA-directed RNA polymerase activity"/>
    <property type="evidence" value="ECO:0007669"/>
    <property type="project" value="UniProtKB-KW"/>
</dbReference>
<dbReference type="GO" id="GO:0075526">
    <property type="term" value="P:cap snatching"/>
    <property type="evidence" value="ECO:0007669"/>
    <property type="project" value="UniProtKB-KW"/>
</dbReference>
<dbReference type="GO" id="GO:0006351">
    <property type="term" value="P:DNA-templated transcription"/>
    <property type="evidence" value="ECO:0007669"/>
    <property type="project" value="InterPro"/>
</dbReference>
<dbReference type="GO" id="GO:0039694">
    <property type="term" value="P:viral RNA genome replication"/>
    <property type="evidence" value="ECO:0007669"/>
    <property type="project" value="InterPro"/>
</dbReference>
<dbReference type="InterPro" id="IPR048006">
    <property type="entry name" value="CapSnatch_bunyavir"/>
</dbReference>
<dbReference type="InterPro" id="IPR054155">
    <property type="entry name" value="CapSnatchArena_N"/>
</dbReference>
<dbReference type="InterPro" id="IPR016268">
    <property type="entry name" value="RNA-dir_pol_hantavirus"/>
</dbReference>
<dbReference type="InterPro" id="IPR024378">
    <property type="entry name" value="RNA-dir_pol_N_hantavirus"/>
</dbReference>
<dbReference type="InterPro" id="IPR007099">
    <property type="entry name" value="RNA-dir_pol_NSvirus"/>
</dbReference>
<dbReference type="InterPro" id="IPR007322">
    <property type="entry name" value="RNA_pol_bunyavir"/>
</dbReference>
<dbReference type="NCBIfam" id="TIGR04202">
    <property type="entry name" value="capSnatchArena"/>
    <property type="match status" value="1"/>
</dbReference>
<dbReference type="Pfam" id="PF04196">
    <property type="entry name" value="Bunya_RdRp"/>
    <property type="match status" value="1"/>
</dbReference>
<dbReference type="Pfam" id="PF21991">
    <property type="entry name" value="capSnatchArena"/>
    <property type="match status" value="1"/>
</dbReference>
<dbReference type="Pfam" id="PF12426">
    <property type="entry name" value="DUF3674"/>
    <property type="match status" value="1"/>
</dbReference>
<dbReference type="PIRSF" id="PIRSF000825">
    <property type="entry name" value="L_HantaV"/>
    <property type="match status" value="1"/>
</dbReference>
<dbReference type="PROSITE" id="PS50525">
    <property type="entry name" value="RDRP_SSRNA_NEG_SEG"/>
    <property type="match status" value="1"/>
</dbReference>
<evidence type="ECO:0000250" key="1">
    <source>
        <dbReference type="UniProtKB" id="A2SZS3"/>
    </source>
</evidence>
<evidence type="ECO:0000250" key="2">
    <source>
        <dbReference type="UniProtKB" id="I0DF35"/>
    </source>
</evidence>
<evidence type="ECO:0000250" key="3">
    <source>
        <dbReference type="UniProtKB" id="P23456"/>
    </source>
</evidence>
<evidence type="ECO:0000250" key="4">
    <source>
        <dbReference type="UniProtKB" id="Q9E005"/>
    </source>
</evidence>
<evidence type="ECO:0000250" key="5">
    <source>
        <dbReference type="UniProtKB" id="Q9YQR5"/>
    </source>
</evidence>
<evidence type="ECO:0000255" key="6">
    <source>
        <dbReference type="PROSITE-ProRule" id="PRU00539"/>
    </source>
</evidence>
<evidence type="ECO:0000269" key="7">
    <source>
    </source>
</evidence>
<evidence type="ECO:0000269" key="8">
    <source>
    </source>
</evidence>
<evidence type="ECO:0000269" key="9">
    <source>
    </source>
</evidence>
<evidence type="ECO:0000303" key="10">
    <source>
    </source>
</evidence>
<evidence type="ECO:0000305" key="11"/>
<evidence type="ECO:0000312" key="12">
    <source>
        <dbReference type="EMBL" id="AIA08875.1"/>
    </source>
</evidence>
<organism>
    <name type="scientific">Sin Nombre orthohantavirus</name>
    <name type="common">SNV</name>
    <name type="synonym">Sin Nombre virus</name>
    <dbReference type="NCBI Taxonomy" id="3052499"/>
    <lineage>
        <taxon>Viruses</taxon>
        <taxon>Riboviria</taxon>
        <taxon>Orthornavirae</taxon>
        <taxon>Negarnaviricota</taxon>
        <taxon>Polyploviricotina</taxon>
        <taxon>Ellioviricetes</taxon>
        <taxon>Bunyavirales</taxon>
        <taxon>Hantaviridae</taxon>
        <taxon>Mammantavirinae</taxon>
        <taxon>Orthohantavirus</taxon>
    </lineage>
</organism>
<organismHost>
    <name type="scientific">Homo sapiens</name>
    <name type="common">Human</name>
    <dbReference type="NCBI Taxonomy" id="9606"/>
</organismHost>
<organismHost>
    <name type="scientific">Peromyscus maniculatus</name>
    <name type="common">North American deer mouse</name>
    <dbReference type="NCBI Taxonomy" id="10042"/>
</organismHost>
<proteinExistence type="evidence at protein level"/>
<reference key="1">
    <citation type="journal article" date="1994" name="Virology">
        <title>Genome structure and variability of a virus causing hantavirus pulmonary syndrome.</title>
        <authorList>
            <person name="Spiropoulou C.F."/>
            <person name="Morzunov S."/>
            <person name="Feldmann H."/>
            <person name="Sanchez A."/>
            <person name="Peters C.J."/>
            <person name="Nichol S.T."/>
        </authorList>
    </citation>
    <scope>NUCLEOTIDE SEQUENCE [GENOMIC RNA]</scope>
</reference>
<reference key="2">
    <citation type="journal article" date="1995" name="J. Virol.">
        <title>Complete genetic characterization and analysis of isolation of Sin Nombre virus.</title>
        <authorList>
            <person name="Chizhikov V.E."/>
            <person name="Spiropoulou C.F."/>
            <person name="Morzunov S.P."/>
            <person name="Monroe M.C."/>
            <person name="Peters C.J."/>
            <person name="Nichol S.T."/>
        </authorList>
    </citation>
    <scope>NUCLEOTIDE SEQUENCE [GENOMIC RNA]</scope>
</reference>
<reference key="3">
    <citation type="journal article" date="2014" name="Proc. Natl. Acad. Sci. U.S.A.">
        <title>Pathophysiology of hantavirus pulmonary syndrome in rhesus macaques.</title>
        <authorList>
            <person name="Safronetz D."/>
            <person name="Prescott J."/>
            <person name="Feldmann F."/>
            <person name="Haddock E."/>
            <person name="Rosenke R."/>
            <person name="Okumura A."/>
            <person name="Brining D."/>
            <person name="Dahlstrom E."/>
            <person name="Porcella S.F."/>
            <person name="Ebihara H."/>
            <person name="Scott D.P."/>
            <person name="Hjelle B."/>
            <person name="Feldmann H."/>
        </authorList>
    </citation>
    <scope>NUCLEOTIDE SEQUENCE [GENOMIC RNA]</scope>
    <source>
        <strain evidence="12">77734</strain>
    </source>
</reference>
<reference key="4">
    <citation type="journal article" date="2005" name="Arch. Virol.">
        <title>L protein, the RNA-dependent RNA polymerase of hantaviruses.</title>
        <authorList>
            <person name="Kukkonen S.K."/>
            <person name="Vaheri A."/>
            <person name="Plyusnin A."/>
        </authorList>
    </citation>
    <scope>REVIEW</scope>
</reference>
<reference key="5">
    <citation type="journal article" date="2014" name="J. Virol.">
        <title>Interaction between hantavirus nucleocapsid protein (N) and RNA-dependent RNA polymerase (RdRp) mutants reveals the requirement of an N-RdRp interaction for viral RNA synthesis.</title>
        <authorList>
            <person name="Cheng E."/>
            <person name="Wang Z."/>
            <person name="Mir M.A."/>
        </authorList>
    </citation>
    <scope>INTERACTION WITH VIRAL NUCLEOPROTEIN</scope>
</reference>
<reference key="6">
    <citation type="journal article" date="2017" name="Crit. Rev. Microbiol.">
        <title>Bunyaviridae RdRps: structure, motifs, and RNA synthesis machinery.</title>
        <authorList>
            <person name="Amroun A."/>
            <person name="Priet S."/>
            <person name="de Lamballerie X."/>
            <person name="Querat G."/>
        </authorList>
    </citation>
    <scope>REVIEW</scope>
</reference>
<reference key="7">
    <citation type="journal article" date="2020" name="Trends Microbiol.">
        <title>The Cap-Snatching Mechanism of Bunyaviruses.</title>
        <authorList>
            <person name="Olschewski S."/>
            <person name="Cusack S."/>
            <person name="Rosenthal M."/>
        </authorList>
    </citation>
    <scope>REVIEW</scope>
</reference>